<feature type="chain" id="PRO_1000086649" description="Large ribosomal subunit protein uL18">
    <location>
        <begin position="1"/>
        <end position="128"/>
    </location>
</feature>
<gene>
    <name evidence="1" type="primary">rplR</name>
    <name type="ordered locus">Acel_0322</name>
</gene>
<keyword id="KW-1185">Reference proteome</keyword>
<keyword id="KW-0687">Ribonucleoprotein</keyword>
<keyword id="KW-0689">Ribosomal protein</keyword>
<keyword id="KW-0694">RNA-binding</keyword>
<keyword id="KW-0699">rRNA-binding</keyword>
<comment type="function">
    <text evidence="1">This is one of the proteins that bind and probably mediate the attachment of the 5S RNA into the large ribosomal subunit, where it forms part of the central protuberance.</text>
</comment>
<comment type="subunit">
    <text evidence="1">Part of the 50S ribosomal subunit; part of the 5S rRNA/L5/L18/L25 subcomplex. Contacts the 5S and 23S rRNAs.</text>
</comment>
<comment type="similarity">
    <text evidence="1">Belongs to the universal ribosomal protein uL18 family.</text>
</comment>
<reference key="1">
    <citation type="journal article" date="2009" name="Genome Res.">
        <title>Complete genome of the cellulolytic thermophile Acidothermus cellulolyticus 11B provides insights into its ecophysiological and evolutionary adaptations.</title>
        <authorList>
            <person name="Barabote R.D."/>
            <person name="Xie G."/>
            <person name="Leu D.H."/>
            <person name="Normand P."/>
            <person name="Necsulea A."/>
            <person name="Daubin V."/>
            <person name="Medigue C."/>
            <person name="Adney W.S."/>
            <person name="Xu X.C."/>
            <person name="Lapidus A."/>
            <person name="Parales R.E."/>
            <person name="Detter C."/>
            <person name="Pujic P."/>
            <person name="Bruce D."/>
            <person name="Lavire C."/>
            <person name="Challacombe J.F."/>
            <person name="Brettin T.S."/>
            <person name="Berry A.M."/>
        </authorList>
    </citation>
    <scope>NUCLEOTIDE SEQUENCE [LARGE SCALE GENOMIC DNA]</scope>
    <source>
        <strain>ATCC 43068 / DSM 8971 / 11B</strain>
    </source>
</reference>
<name>RL18_ACIC1</name>
<proteinExistence type="inferred from homology"/>
<protein>
    <recommendedName>
        <fullName evidence="1">Large ribosomal subunit protein uL18</fullName>
    </recommendedName>
    <alternativeName>
        <fullName evidence="2">50S ribosomal protein L18</fullName>
    </alternativeName>
</protein>
<organism>
    <name type="scientific">Acidothermus cellulolyticus (strain ATCC 43068 / DSM 8971 / 11B)</name>
    <dbReference type="NCBI Taxonomy" id="351607"/>
    <lineage>
        <taxon>Bacteria</taxon>
        <taxon>Bacillati</taxon>
        <taxon>Actinomycetota</taxon>
        <taxon>Actinomycetes</taxon>
        <taxon>Acidothermales</taxon>
        <taxon>Acidothermaceae</taxon>
        <taxon>Acidothermus</taxon>
    </lineage>
</organism>
<dbReference type="EMBL" id="CP000481">
    <property type="protein sequence ID" value="ABK52096.1"/>
    <property type="molecule type" value="Genomic_DNA"/>
</dbReference>
<dbReference type="RefSeq" id="WP_011719159.1">
    <property type="nucleotide sequence ID" value="NC_008578.1"/>
</dbReference>
<dbReference type="SMR" id="A0LRN6"/>
<dbReference type="FunCoup" id="A0LRN6">
    <property type="interactions" value="226"/>
</dbReference>
<dbReference type="STRING" id="351607.Acel_0322"/>
<dbReference type="KEGG" id="ace:Acel_0322"/>
<dbReference type="eggNOG" id="COG0256">
    <property type="taxonomic scope" value="Bacteria"/>
</dbReference>
<dbReference type="HOGENOM" id="CLU_098841_0_1_11"/>
<dbReference type="InParanoid" id="A0LRN6"/>
<dbReference type="OrthoDB" id="9810939at2"/>
<dbReference type="Proteomes" id="UP000008221">
    <property type="component" value="Chromosome"/>
</dbReference>
<dbReference type="GO" id="GO:0022625">
    <property type="term" value="C:cytosolic large ribosomal subunit"/>
    <property type="evidence" value="ECO:0007669"/>
    <property type="project" value="TreeGrafter"/>
</dbReference>
<dbReference type="GO" id="GO:0008097">
    <property type="term" value="F:5S rRNA binding"/>
    <property type="evidence" value="ECO:0007669"/>
    <property type="project" value="TreeGrafter"/>
</dbReference>
<dbReference type="GO" id="GO:0003735">
    <property type="term" value="F:structural constituent of ribosome"/>
    <property type="evidence" value="ECO:0007669"/>
    <property type="project" value="InterPro"/>
</dbReference>
<dbReference type="GO" id="GO:0006412">
    <property type="term" value="P:translation"/>
    <property type="evidence" value="ECO:0007669"/>
    <property type="project" value="UniProtKB-UniRule"/>
</dbReference>
<dbReference type="CDD" id="cd00432">
    <property type="entry name" value="Ribosomal_L18_L5e"/>
    <property type="match status" value="1"/>
</dbReference>
<dbReference type="FunFam" id="3.30.420.100:FF:000001">
    <property type="entry name" value="50S ribosomal protein L18"/>
    <property type="match status" value="1"/>
</dbReference>
<dbReference type="Gene3D" id="3.30.420.100">
    <property type="match status" value="1"/>
</dbReference>
<dbReference type="HAMAP" id="MF_01337_B">
    <property type="entry name" value="Ribosomal_uL18_B"/>
    <property type="match status" value="1"/>
</dbReference>
<dbReference type="InterPro" id="IPR004389">
    <property type="entry name" value="Ribosomal_uL18_bac-type"/>
</dbReference>
<dbReference type="InterPro" id="IPR005484">
    <property type="entry name" value="Ribosomal_uL18_bac/euk"/>
</dbReference>
<dbReference type="NCBIfam" id="TIGR00060">
    <property type="entry name" value="L18_bact"/>
    <property type="match status" value="1"/>
</dbReference>
<dbReference type="PANTHER" id="PTHR12899">
    <property type="entry name" value="39S RIBOSOMAL PROTEIN L18, MITOCHONDRIAL"/>
    <property type="match status" value="1"/>
</dbReference>
<dbReference type="PANTHER" id="PTHR12899:SF3">
    <property type="entry name" value="LARGE RIBOSOMAL SUBUNIT PROTEIN UL18M"/>
    <property type="match status" value="1"/>
</dbReference>
<dbReference type="Pfam" id="PF00861">
    <property type="entry name" value="Ribosomal_L18p"/>
    <property type="match status" value="1"/>
</dbReference>
<dbReference type="SUPFAM" id="SSF53137">
    <property type="entry name" value="Translational machinery components"/>
    <property type="match status" value="1"/>
</dbReference>
<accession>A0LRN6</accession>
<evidence type="ECO:0000255" key="1">
    <source>
        <dbReference type="HAMAP-Rule" id="MF_01337"/>
    </source>
</evidence>
<evidence type="ECO:0000305" key="2"/>
<sequence>MPQLLSRRVGRGSTRTAARMRRHFRVRKKISGTPERPRLVVHRSARHVFVQIVDDTRGHTLASASSFEPEMRSFAGDKTAKARRVGQLIAERAKAAGITTVVFDRAGYRYHGRVAAIADGAREGGLVL</sequence>